<accession>Q9SX29</accession>
<accession>A8MS26</accession>
<protein>
    <recommendedName>
        <fullName evidence="6">ATP-dependent Clp protease adapter protein CLPS1, chloroplastic</fullName>
    </recommendedName>
</protein>
<proteinExistence type="evidence at protein level"/>
<keyword id="KW-0002">3D-structure</keyword>
<keyword id="KW-0025">Alternative splicing</keyword>
<keyword id="KW-0150">Chloroplast</keyword>
<keyword id="KW-0378">Hydrolase</keyword>
<keyword id="KW-0934">Plastid</keyword>
<keyword id="KW-0645">Protease</keyword>
<keyword id="KW-1185">Reference proteome</keyword>
<keyword id="KW-0809">Transit peptide</keyword>
<sequence length="159" mass="17001">METAICGRLALAPSSLFNSKSGDKHLVSKGPCVNRSILMTLSTSAALGKGGGVLDKPIIEKTTPGRESEFDLRKSKKIAPPYRVILHNDNFNKREYVVQVLMKVIPGMTVDNAVNIMQEAHINGLAVVIVCAQADAEQHCMQLRGNGLLSSVEPDGGGC</sequence>
<evidence type="ECO:0000250" key="1">
    <source>
        <dbReference type="UniProtKB" id="P0A8Q6"/>
    </source>
</evidence>
<evidence type="ECO:0000255" key="2"/>
<evidence type="ECO:0000269" key="3">
    <source>
    </source>
</evidence>
<evidence type="ECO:0000269" key="4">
    <source>
    </source>
</evidence>
<evidence type="ECO:0000303" key="5">
    <source>
    </source>
</evidence>
<evidence type="ECO:0000303" key="6">
    <source ref="6"/>
</evidence>
<evidence type="ECO:0000305" key="7"/>
<evidence type="ECO:0000312" key="8">
    <source>
        <dbReference type="Araport" id="AT1G68660"/>
    </source>
</evidence>
<evidence type="ECO:0000312" key="9">
    <source>
        <dbReference type="EMBL" id="AAD49977.1"/>
    </source>
</evidence>
<evidence type="ECO:0000312" key="10">
    <source>
        <dbReference type="EMBL" id="AAK73973.1"/>
    </source>
</evidence>
<evidence type="ECO:0000312" key="11">
    <source>
        <dbReference type="Proteomes" id="UP000006548"/>
    </source>
</evidence>
<evidence type="ECO:0007829" key="12">
    <source>
        <dbReference type="PDB" id="7D34"/>
    </source>
</evidence>
<name>CLPS1_ARATH</name>
<comment type="function">
    <text evidence="1 3 4">Small adapter protein that modulate the activity of CLPC (By similarity). Involved in plastid biogenesis in particular when chloroplast protein synthesis capacity is a limiting factor (PubMed:23898032). Probably involved in substrate selection for plastid Clp protease system (PubMed:23898032). Recruitment to ClpC chaperones is facilitated by CLPF thus forming a binary adapter for selective substrate recognition and delivery to plastid Clp protease system (CLPC) (PubMed:26419670).</text>
</comment>
<comment type="subunit">
    <text evidence="3 4">Interacts with CLPC1 (via N-terminus) and CLPC2, but not with CLPt1 or CLPT2 (PubMed:23898032). Binds to ClpF; this interaction stimulates their association with ClpC (PubMed:26419670).</text>
</comment>
<comment type="subcellular location">
    <subcellularLocation>
        <location evidence="3">Plastid</location>
        <location evidence="3">Chloroplast stroma</location>
    </subcellularLocation>
</comment>
<comment type="alternative products">
    <event type="alternative splicing"/>
    <isoform>
        <id>Q9SX29-1</id>
        <name>1</name>
        <sequence type="displayed"/>
    </isoform>
    <isoform>
        <id>Q9SX29-2</id>
        <name>2</name>
        <sequence type="described" ref="VSP_057948"/>
    </isoform>
</comment>
<comment type="tissue specificity">
    <text evidence="3">Expressed exclusively in photosynthetic green tissues with high levels in young, developing leaf tissues.</text>
</comment>
<comment type="developmental stage">
    <text evidence="3">Not detected in senescing leaves.</text>
</comment>
<comment type="disruption phenotype">
    <text evidence="3 6">No visible phenotype (PubMed:23898032, Ref.6). Weak chloroplast phenotype under short-day conditions (PubMed:23898032).</text>
</comment>
<comment type="similarity">
    <text evidence="7">Belongs to the ClpS family.</text>
</comment>
<dbReference type="EMBL" id="AC008075">
    <property type="protein sequence ID" value="AAD49977.1"/>
    <property type="molecule type" value="Genomic_DNA"/>
</dbReference>
<dbReference type="EMBL" id="CP002684">
    <property type="protein sequence ID" value="AEE34824.1"/>
    <property type="molecule type" value="Genomic_DNA"/>
</dbReference>
<dbReference type="EMBL" id="CP002684">
    <property type="protein sequence ID" value="AEE34825.1"/>
    <property type="molecule type" value="Genomic_DNA"/>
</dbReference>
<dbReference type="EMBL" id="AF336921">
    <property type="protein sequence ID" value="AAG54002.1"/>
    <property type="molecule type" value="mRNA"/>
</dbReference>
<dbReference type="EMBL" id="AY045615">
    <property type="protein sequence ID" value="AAK73973.1"/>
    <property type="molecule type" value="mRNA"/>
</dbReference>
<dbReference type="EMBL" id="AY120696">
    <property type="protein sequence ID" value="AAM52239.1"/>
    <property type="molecule type" value="mRNA"/>
</dbReference>
<dbReference type="EMBL" id="AY085795">
    <property type="protein sequence ID" value="AAM63011.1"/>
    <property type="molecule type" value="mRNA"/>
</dbReference>
<dbReference type="PIR" id="B96711">
    <property type="entry name" value="B96711"/>
</dbReference>
<dbReference type="RefSeq" id="NP_001077794.1">
    <molecule id="Q9SX29-2"/>
    <property type="nucleotide sequence ID" value="NM_001084325.1"/>
</dbReference>
<dbReference type="RefSeq" id="NP_564937.1">
    <molecule id="Q9SX29-1"/>
    <property type="nucleotide sequence ID" value="NM_105538.3"/>
</dbReference>
<dbReference type="PDB" id="7D34">
    <property type="method" value="X-ray"/>
    <property type="resolution" value="2.01 A"/>
    <property type="chains" value="A/B=79-159"/>
</dbReference>
<dbReference type="PDBsum" id="7D34"/>
<dbReference type="SMR" id="Q9SX29"/>
<dbReference type="FunCoup" id="Q9SX29">
    <property type="interactions" value="625"/>
</dbReference>
<dbReference type="STRING" id="3702.Q9SX29"/>
<dbReference type="PaxDb" id="3702-AT1G68660.1"/>
<dbReference type="ProteomicsDB" id="246661">
    <molecule id="Q9SX29-1"/>
</dbReference>
<dbReference type="EnsemblPlants" id="AT1G68660.1">
    <molecule id="Q9SX29-1"/>
    <property type="protein sequence ID" value="AT1G68660.1"/>
    <property type="gene ID" value="AT1G68660"/>
</dbReference>
<dbReference type="EnsemblPlants" id="AT1G68660.2">
    <molecule id="Q9SX29-2"/>
    <property type="protein sequence ID" value="AT1G68660.2"/>
    <property type="gene ID" value="AT1G68660"/>
</dbReference>
<dbReference type="GeneID" id="843196"/>
<dbReference type="Gramene" id="AT1G68660.1">
    <molecule id="Q9SX29-1"/>
    <property type="protein sequence ID" value="AT1G68660.1"/>
    <property type="gene ID" value="AT1G68660"/>
</dbReference>
<dbReference type="Gramene" id="AT1G68660.2">
    <molecule id="Q9SX29-2"/>
    <property type="protein sequence ID" value="AT1G68660.2"/>
    <property type="gene ID" value="AT1G68660"/>
</dbReference>
<dbReference type="KEGG" id="ath:AT1G68660"/>
<dbReference type="Araport" id="AT1G68660"/>
<dbReference type="TAIR" id="AT1G68660">
    <property type="gene designation" value="CLPS1"/>
</dbReference>
<dbReference type="eggNOG" id="ENOG502RZXT">
    <property type="taxonomic scope" value="Eukaryota"/>
</dbReference>
<dbReference type="HOGENOM" id="CLU_134083_1_0_1"/>
<dbReference type="InParanoid" id="Q9SX29"/>
<dbReference type="OMA" id="EAHHNGM"/>
<dbReference type="OrthoDB" id="2013930at2759"/>
<dbReference type="PhylomeDB" id="Q9SX29"/>
<dbReference type="PRO" id="PR:Q9SX29"/>
<dbReference type="Proteomes" id="UP000006548">
    <property type="component" value="Chromosome 1"/>
</dbReference>
<dbReference type="ExpressionAtlas" id="Q9SX29">
    <property type="expression patterns" value="baseline and differential"/>
</dbReference>
<dbReference type="GO" id="GO:0009570">
    <property type="term" value="C:chloroplast stroma"/>
    <property type="evidence" value="ECO:0007669"/>
    <property type="project" value="UniProtKB-SubCell"/>
</dbReference>
<dbReference type="GO" id="GO:0008233">
    <property type="term" value="F:peptidase activity"/>
    <property type="evidence" value="ECO:0007669"/>
    <property type="project" value="UniProtKB-KW"/>
</dbReference>
<dbReference type="GO" id="GO:0030674">
    <property type="term" value="F:protein-macromolecule adaptor activity"/>
    <property type="evidence" value="ECO:0000314"/>
    <property type="project" value="TAIR"/>
</dbReference>
<dbReference type="GO" id="GO:1903052">
    <property type="term" value="P:positive regulation of proteolysis involved in protein catabolic process"/>
    <property type="evidence" value="ECO:0000314"/>
    <property type="project" value="TAIR"/>
</dbReference>
<dbReference type="GO" id="GO:0030163">
    <property type="term" value="P:protein catabolic process"/>
    <property type="evidence" value="ECO:0007669"/>
    <property type="project" value="InterPro"/>
</dbReference>
<dbReference type="GO" id="GO:0006508">
    <property type="term" value="P:proteolysis"/>
    <property type="evidence" value="ECO:0007669"/>
    <property type="project" value="UniProtKB-KW"/>
</dbReference>
<dbReference type="FunFam" id="3.30.1390.10:FF:000006">
    <property type="entry name" value="ATP-dependent Clp protease adapter protein CLPS1, chloroplastic"/>
    <property type="match status" value="1"/>
</dbReference>
<dbReference type="Gene3D" id="3.30.1390.10">
    <property type="match status" value="1"/>
</dbReference>
<dbReference type="InterPro" id="IPR022935">
    <property type="entry name" value="ClpS"/>
</dbReference>
<dbReference type="InterPro" id="IPR003769">
    <property type="entry name" value="ClpS_core"/>
</dbReference>
<dbReference type="InterPro" id="IPR014719">
    <property type="entry name" value="Ribosomal_bL12_C/ClpS-like"/>
</dbReference>
<dbReference type="PANTHER" id="PTHR33473">
    <property type="entry name" value="ATP-DEPENDENT CLP PROTEASE ADAPTER PROTEIN CLPS1, CHLOROPLASTIC"/>
    <property type="match status" value="1"/>
</dbReference>
<dbReference type="PANTHER" id="PTHR33473:SF17">
    <property type="entry name" value="ATP-DEPENDENT CLP PROTEASE ADAPTER PROTEIN CLPS1, CHLOROPLASTIC"/>
    <property type="match status" value="1"/>
</dbReference>
<dbReference type="Pfam" id="PF02617">
    <property type="entry name" value="ClpS"/>
    <property type="match status" value="1"/>
</dbReference>
<dbReference type="SUPFAM" id="SSF54736">
    <property type="entry name" value="ClpS-like"/>
    <property type="match status" value="1"/>
</dbReference>
<feature type="transit peptide" description="Chloroplast" evidence="2">
    <location>
        <begin position="1"/>
        <end position="44"/>
    </location>
</feature>
<feature type="chain" id="PRO_0000434551" description="ATP-dependent Clp protease adapter protein CLPS1, chloroplastic">
    <location>
        <begin position="45"/>
        <end position="159"/>
    </location>
</feature>
<feature type="splice variant" id="VSP_057948" description="In isoform 2.">
    <location>
        <begin position="104"/>
        <end position="133"/>
    </location>
</feature>
<feature type="mutagenesis site" description="Impaired interaction with CLPF." evidence="4">
    <original>DN</original>
    <variation>AA</variation>
    <location>
        <begin position="89"/>
        <end position="90"/>
    </location>
</feature>
<feature type="mutagenesis site" description="Loss of interactions with some potential substrates." evidence="3">
    <original>D</original>
    <variation>A</variation>
    <location>
        <position position="89"/>
    </location>
</feature>
<feature type="mutagenesis site" description="Loss of interactions with some potential substrates." evidence="3">
    <original>N</original>
    <variation>A</variation>
    <location>
        <position position="90"/>
    </location>
</feature>
<feature type="strand" evidence="12">
    <location>
        <begin position="82"/>
        <end position="87"/>
    </location>
</feature>
<feature type="strand" evidence="12">
    <location>
        <begin position="90"/>
        <end position="93"/>
    </location>
</feature>
<feature type="helix" evidence="12">
    <location>
        <begin position="94"/>
        <end position="104"/>
    </location>
</feature>
<feature type="helix" evidence="12">
    <location>
        <begin position="110"/>
        <end position="123"/>
    </location>
</feature>
<feature type="strand" evidence="12">
    <location>
        <begin position="124"/>
        <end position="131"/>
    </location>
</feature>
<feature type="helix" evidence="12">
    <location>
        <begin position="133"/>
        <end position="145"/>
    </location>
</feature>
<feature type="strand" evidence="12">
    <location>
        <begin position="149"/>
        <end position="154"/>
    </location>
</feature>
<organism evidence="11">
    <name type="scientific">Arabidopsis thaliana</name>
    <name type="common">Mouse-ear cress</name>
    <dbReference type="NCBI Taxonomy" id="3702"/>
    <lineage>
        <taxon>Eukaryota</taxon>
        <taxon>Viridiplantae</taxon>
        <taxon>Streptophyta</taxon>
        <taxon>Embryophyta</taxon>
        <taxon>Tracheophyta</taxon>
        <taxon>Spermatophyta</taxon>
        <taxon>Magnoliopsida</taxon>
        <taxon>eudicotyledons</taxon>
        <taxon>Gunneridae</taxon>
        <taxon>Pentapetalae</taxon>
        <taxon>rosids</taxon>
        <taxon>malvids</taxon>
        <taxon>Brassicales</taxon>
        <taxon>Brassicaceae</taxon>
        <taxon>Camelineae</taxon>
        <taxon>Arabidopsis</taxon>
    </lineage>
</organism>
<gene>
    <name evidence="6" type="primary">CPLS1</name>
    <name evidence="5" type="synonym">CLPT</name>
    <name evidence="8" type="ordered locus">At1g68660</name>
    <name evidence="9" type="ORF">F24J5.10</name>
    <name evidence="10" type="ORF">F24J5.4</name>
</gene>
<reference key="1">
    <citation type="journal article" date="2000" name="Nature">
        <title>Sequence and analysis of chromosome 1 of the plant Arabidopsis thaliana.</title>
        <authorList>
            <person name="Theologis A."/>
            <person name="Ecker J.R."/>
            <person name="Palm C.J."/>
            <person name="Federspiel N.A."/>
            <person name="Kaul S."/>
            <person name="White O."/>
            <person name="Alonso J."/>
            <person name="Altafi H."/>
            <person name="Araujo R."/>
            <person name="Bowman C.L."/>
            <person name="Brooks S.Y."/>
            <person name="Buehler E."/>
            <person name="Chan A."/>
            <person name="Chao Q."/>
            <person name="Chen H."/>
            <person name="Cheuk R.F."/>
            <person name="Chin C.W."/>
            <person name="Chung M.K."/>
            <person name="Conn L."/>
            <person name="Conway A.B."/>
            <person name="Conway A.R."/>
            <person name="Creasy T.H."/>
            <person name="Dewar K."/>
            <person name="Dunn P."/>
            <person name="Etgu P."/>
            <person name="Feldblyum T.V."/>
            <person name="Feng J.-D."/>
            <person name="Fong B."/>
            <person name="Fujii C.Y."/>
            <person name="Gill J.E."/>
            <person name="Goldsmith A.D."/>
            <person name="Haas B."/>
            <person name="Hansen N.F."/>
            <person name="Hughes B."/>
            <person name="Huizar L."/>
            <person name="Hunter J.L."/>
            <person name="Jenkins J."/>
            <person name="Johnson-Hopson C."/>
            <person name="Khan S."/>
            <person name="Khaykin E."/>
            <person name="Kim C.J."/>
            <person name="Koo H.L."/>
            <person name="Kremenetskaia I."/>
            <person name="Kurtz D.B."/>
            <person name="Kwan A."/>
            <person name="Lam B."/>
            <person name="Langin-Hooper S."/>
            <person name="Lee A."/>
            <person name="Lee J.M."/>
            <person name="Lenz C.A."/>
            <person name="Li J.H."/>
            <person name="Li Y.-P."/>
            <person name="Lin X."/>
            <person name="Liu S.X."/>
            <person name="Liu Z.A."/>
            <person name="Luros J.S."/>
            <person name="Maiti R."/>
            <person name="Marziali A."/>
            <person name="Militscher J."/>
            <person name="Miranda M."/>
            <person name="Nguyen M."/>
            <person name="Nierman W.C."/>
            <person name="Osborne B.I."/>
            <person name="Pai G."/>
            <person name="Peterson J."/>
            <person name="Pham P.K."/>
            <person name="Rizzo M."/>
            <person name="Rooney T."/>
            <person name="Rowley D."/>
            <person name="Sakano H."/>
            <person name="Salzberg S.L."/>
            <person name="Schwartz J.R."/>
            <person name="Shinn P."/>
            <person name="Southwick A.M."/>
            <person name="Sun H."/>
            <person name="Tallon L.J."/>
            <person name="Tambunga G."/>
            <person name="Toriumi M.J."/>
            <person name="Town C.D."/>
            <person name="Utterback T."/>
            <person name="Van Aken S."/>
            <person name="Vaysberg M."/>
            <person name="Vysotskaia V.S."/>
            <person name="Walker M."/>
            <person name="Wu D."/>
            <person name="Yu G."/>
            <person name="Fraser C.M."/>
            <person name="Venter J.C."/>
            <person name="Davis R.W."/>
        </authorList>
    </citation>
    <scope>NUCLEOTIDE SEQUENCE [LARGE SCALE GENOMIC DNA]</scope>
    <source>
        <strain>cv. Columbia</strain>
    </source>
</reference>
<reference key="2">
    <citation type="journal article" date="2017" name="Plant J.">
        <title>Araport11: a complete reannotation of the Arabidopsis thaliana reference genome.</title>
        <authorList>
            <person name="Cheng C.Y."/>
            <person name="Krishnakumar V."/>
            <person name="Chan A.P."/>
            <person name="Thibaud-Nissen F."/>
            <person name="Schobel S."/>
            <person name="Town C.D."/>
        </authorList>
    </citation>
    <scope>GENOME REANNOTATION</scope>
    <source>
        <strain>cv. Columbia</strain>
    </source>
</reference>
<reference key="3">
    <citation type="journal article" date="2003" name="Science">
        <title>Empirical analysis of transcriptional activity in the Arabidopsis genome.</title>
        <authorList>
            <person name="Yamada K."/>
            <person name="Lim J."/>
            <person name="Dale J.M."/>
            <person name="Chen H."/>
            <person name="Shinn P."/>
            <person name="Palm C.J."/>
            <person name="Southwick A.M."/>
            <person name="Wu H.C."/>
            <person name="Kim C.J."/>
            <person name="Nguyen M."/>
            <person name="Pham P.K."/>
            <person name="Cheuk R.F."/>
            <person name="Karlin-Newmann G."/>
            <person name="Liu S.X."/>
            <person name="Lam B."/>
            <person name="Sakano H."/>
            <person name="Wu T."/>
            <person name="Yu G."/>
            <person name="Miranda M."/>
            <person name="Quach H.L."/>
            <person name="Tripp M."/>
            <person name="Chang C.H."/>
            <person name="Lee J.M."/>
            <person name="Toriumi M.J."/>
            <person name="Chan M.M."/>
            <person name="Tang C.C."/>
            <person name="Onodera C.S."/>
            <person name="Deng J.M."/>
            <person name="Akiyama K."/>
            <person name="Ansari Y."/>
            <person name="Arakawa T."/>
            <person name="Banh J."/>
            <person name="Banno F."/>
            <person name="Bowser L."/>
            <person name="Brooks S.Y."/>
            <person name="Carninci P."/>
            <person name="Chao Q."/>
            <person name="Choy N."/>
            <person name="Enju A."/>
            <person name="Goldsmith A.D."/>
            <person name="Gurjal M."/>
            <person name="Hansen N.F."/>
            <person name="Hayashizaki Y."/>
            <person name="Johnson-Hopson C."/>
            <person name="Hsuan V.W."/>
            <person name="Iida K."/>
            <person name="Karnes M."/>
            <person name="Khan S."/>
            <person name="Koesema E."/>
            <person name="Ishida J."/>
            <person name="Jiang P.X."/>
            <person name="Jones T."/>
            <person name="Kawai J."/>
            <person name="Kamiya A."/>
            <person name="Meyers C."/>
            <person name="Nakajima M."/>
            <person name="Narusaka M."/>
            <person name="Seki M."/>
            <person name="Sakurai T."/>
            <person name="Satou M."/>
            <person name="Tamse R."/>
            <person name="Vaysberg M."/>
            <person name="Wallender E.K."/>
            <person name="Wong C."/>
            <person name="Yamamura Y."/>
            <person name="Yuan S."/>
            <person name="Shinozaki K."/>
            <person name="Davis R.W."/>
            <person name="Theologis A."/>
            <person name="Ecker J.R."/>
        </authorList>
    </citation>
    <scope>NUCLEOTIDE SEQUENCE [LARGE SCALE MRNA] (ISOFORM 1)</scope>
    <source>
        <strain>cv. Columbia</strain>
    </source>
</reference>
<reference key="4">
    <citation type="submission" date="2002-03" db="EMBL/GenBank/DDBJ databases">
        <title>Full-length cDNA from Arabidopsis thaliana.</title>
        <authorList>
            <person name="Brover V.V."/>
            <person name="Troukhan M.E."/>
            <person name="Alexandrov N.A."/>
            <person name="Lu Y.-P."/>
            <person name="Flavell R.B."/>
            <person name="Feldmann K.A."/>
        </authorList>
    </citation>
    <scope>NUCLEOTIDE SEQUENCE [LARGE SCALE MRNA] (ISOFORM 1)</scope>
</reference>
<reference key="5">
    <citation type="journal article" date="2004" name="J. Biol. Chem.">
        <title>Clp protease complexes from photosynthetic and non-photosynthetic plastids and mitochondria of plants, their predicted three-dimensional structures, and functional implications.</title>
        <authorList>
            <person name="Peltier J.-B."/>
            <person name="Ripoll D.R."/>
            <person name="Friso G."/>
            <person name="Rudella A."/>
            <person name="Cai Y."/>
            <person name="Ytterberg J."/>
            <person name="Giacomelli L."/>
            <person name="Pillardy J."/>
            <person name="van Wijk K.J."/>
        </authorList>
    </citation>
    <scope>NOMENCLATURE</scope>
</reference>
<reference key="6">
    <citation type="journal article" date="2005" name="Physiol. Plantarum">
        <title>The ATP-dependent Clp protease in chloroplasts of higher plants.</title>
        <authorList>
            <person name="Clarke A.K."/>
            <person name="MacDonald T.M."/>
            <person name="Sjoegren L.L."/>
        </authorList>
    </citation>
    <scope>NOMENCLATURE</scope>
    <scope>DISRUPTION PHENOTYPE</scope>
</reference>
<reference key="7">
    <citation type="journal article" date="2013" name="Plant Cell">
        <title>ClpS1 is a conserved substrate selector for the chloroplast Clp protease system in Arabidopsis.</title>
        <authorList>
            <person name="Nishimura K."/>
            <person name="Asakura Y."/>
            <person name="Friso G."/>
            <person name="Kim J."/>
            <person name="Oh S.H."/>
            <person name="Rutschow H."/>
            <person name="Ponnala L."/>
            <person name="van Wijk K.J."/>
        </authorList>
    </citation>
    <scope>TISSUE SPECIFICITY</scope>
    <scope>DEVELOPMENTAL STAGE</scope>
    <scope>SUBCELLULAR LOCATION</scope>
    <scope>INTERACTION WITH CLPC1; CLPC2; CLPT1 AND CLPT2</scope>
    <scope>DISRUPTION PHENOTYPE</scope>
    <scope>MUTAGENESIS OF ASP-89 AND ASN-90</scope>
</reference>
<reference key="8">
    <citation type="journal article" date="2015" name="Plant Cell">
        <title>Discovery of a unique Clp Component, ClpF, in chloroplasts: A proposed binary ClpF-ClpS1 adaptor complex functions in substrate recognition and delivery.</title>
        <authorList>
            <person name="Nishimura K."/>
            <person name="Apitz J."/>
            <person name="Friso G."/>
            <person name="Kim J."/>
            <person name="Ponnala L."/>
            <person name="Grimm B."/>
            <person name="van Wijk K.J."/>
        </authorList>
    </citation>
    <scope>FUNCTION</scope>
    <scope>INTERACTION WITH CLPF</scope>
    <scope>MUTAGENESIS OF 89-ASP-ASN-90</scope>
</reference>